<accession>Q71WL8</accession>
<comment type="catalytic activity">
    <reaction evidence="1">
        <text>tRNA(Arg) + L-arginine + ATP = L-arginyl-tRNA(Arg) + AMP + diphosphate</text>
        <dbReference type="Rhea" id="RHEA:20301"/>
        <dbReference type="Rhea" id="RHEA-COMP:9658"/>
        <dbReference type="Rhea" id="RHEA-COMP:9673"/>
        <dbReference type="ChEBI" id="CHEBI:30616"/>
        <dbReference type="ChEBI" id="CHEBI:32682"/>
        <dbReference type="ChEBI" id="CHEBI:33019"/>
        <dbReference type="ChEBI" id="CHEBI:78442"/>
        <dbReference type="ChEBI" id="CHEBI:78513"/>
        <dbReference type="ChEBI" id="CHEBI:456215"/>
        <dbReference type="EC" id="6.1.1.19"/>
    </reaction>
</comment>
<comment type="subunit">
    <text evidence="1">Monomer.</text>
</comment>
<comment type="subcellular location">
    <subcellularLocation>
        <location evidence="1">Cytoplasm</location>
    </subcellularLocation>
</comment>
<comment type="similarity">
    <text evidence="1">Belongs to the class-I aminoacyl-tRNA synthetase family.</text>
</comment>
<sequence length="556" mass="62824">MNVMQENQIKLIEHIKQAVVQAVGLEEAEVPEILLEVPKDKKHGDYSTNIAMQLARVAKKAPRQIAESIVPELKKDNKLIKEVEIAGPGFINFYLDNAYLTDLVPVILTEDKQYGESDFGKGEKFQIEFVSANPTGDLHLGHARGAAIGDSLANIMKMAGFDVSREYYINDAGNQINNLVLSAEARYFEALGLDSEFPEDGYRGADIISLGKDLAAKYGDKYVHTSEEERRSVFRVDALAFETGKLRADLEEFRVSFDEWFSETSLYEENKVLPALERLRENGYIYEQDGATWLRTTDFEDDKDRVLIKSDGSYTYFLPDIAYHLNKLERGFDVLIDIWGADHHGYIPRMRAAIEALGYSPNQLEVEIIQLVHLFEDGVQVKMSKRTGKSVTMRDLIEEVGLDATRYFFAMRSSDTHMNFDMSLAKSTSNDNPVYYVQYAHARISSILRSGKEQGLEVTKDADMSLLQTEAEYDLLKVLGEFADVVAEAATKRAPHRIVRYLNDLASSFHRFYNSNKVLDMDNLEVTKARLALIKTAQITLRNGLTLLGVSAPEKM</sequence>
<name>SYR_LISMF</name>
<organism>
    <name type="scientific">Listeria monocytogenes serotype 4b (strain F2365)</name>
    <dbReference type="NCBI Taxonomy" id="265669"/>
    <lineage>
        <taxon>Bacteria</taxon>
        <taxon>Bacillati</taxon>
        <taxon>Bacillota</taxon>
        <taxon>Bacilli</taxon>
        <taxon>Bacillales</taxon>
        <taxon>Listeriaceae</taxon>
        <taxon>Listeria</taxon>
    </lineage>
</organism>
<evidence type="ECO:0000255" key="1">
    <source>
        <dbReference type="HAMAP-Rule" id="MF_00123"/>
    </source>
</evidence>
<dbReference type="EC" id="6.1.1.19" evidence="1"/>
<dbReference type="EMBL" id="AE017262">
    <property type="protein sequence ID" value="AAT05298.1"/>
    <property type="molecule type" value="Genomic_DNA"/>
</dbReference>
<dbReference type="RefSeq" id="WP_003728400.1">
    <property type="nucleotide sequence ID" value="NC_002973.6"/>
</dbReference>
<dbReference type="SMR" id="Q71WL8"/>
<dbReference type="KEGG" id="lmf:LMOf2365_2533"/>
<dbReference type="HOGENOM" id="CLU_006406_0_1_9"/>
<dbReference type="GO" id="GO:0005737">
    <property type="term" value="C:cytoplasm"/>
    <property type="evidence" value="ECO:0007669"/>
    <property type="project" value="UniProtKB-SubCell"/>
</dbReference>
<dbReference type="GO" id="GO:0004814">
    <property type="term" value="F:arginine-tRNA ligase activity"/>
    <property type="evidence" value="ECO:0007669"/>
    <property type="project" value="UniProtKB-UniRule"/>
</dbReference>
<dbReference type="GO" id="GO:0005524">
    <property type="term" value="F:ATP binding"/>
    <property type="evidence" value="ECO:0007669"/>
    <property type="project" value="UniProtKB-UniRule"/>
</dbReference>
<dbReference type="GO" id="GO:0006420">
    <property type="term" value="P:arginyl-tRNA aminoacylation"/>
    <property type="evidence" value="ECO:0007669"/>
    <property type="project" value="UniProtKB-UniRule"/>
</dbReference>
<dbReference type="CDD" id="cd07956">
    <property type="entry name" value="Anticodon_Ia_Arg"/>
    <property type="match status" value="1"/>
</dbReference>
<dbReference type="CDD" id="cd00671">
    <property type="entry name" value="ArgRS_core"/>
    <property type="match status" value="1"/>
</dbReference>
<dbReference type="FunFam" id="1.10.730.10:FF:000008">
    <property type="entry name" value="Arginine--tRNA ligase"/>
    <property type="match status" value="1"/>
</dbReference>
<dbReference type="FunFam" id="3.30.1360.70:FF:000003">
    <property type="entry name" value="Arginine--tRNA ligase"/>
    <property type="match status" value="1"/>
</dbReference>
<dbReference type="FunFam" id="3.40.50.620:FF:000062">
    <property type="entry name" value="Arginine--tRNA ligase"/>
    <property type="match status" value="1"/>
</dbReference>
<dbReference type="Gene3D" id="3.30.1360.70">
    <property type="entry name" value="Arginyl tRNA synthetase N-terminal domain"/>
    <property type="match status" value="1"/>
</dbReference>
<dbReference type="Gene3D" id="3.40.50.620">
    <property type="entry name" value="HUPs"/>
    <property type="match status" value="1"/>
</dbReference>
<dbReference type="Gene3D" id="1.10.730.10">
    <property type="entry name" value="Isoleucyl-tRNA Synthetase, Domain 1"/>
    <property type="match status" value="1"/>
</dbReference>
<dbReference type="HAMAP" id="MF_00123">
    <property type="entry name" value="Arg_tRNA_synth"/>
    <property type="match status" value="1"/>
</dbReference>
<dbReference type="InterPro" id="IPR001412">
    <property type="entry name" value="aa-tRNA-synth_I_CS"/>
</dbReference>
<dbReference type="InterPro" id="IPR001278">
    <property type="entry name" value="Arg-tRNA-ligase"/>
</dbReference>
<dbReference type="InterPro" id="IPR005148">
    <property type="entry name" value="Arg-tRNA-synth_N"/>
</dbReference>
<dbReference type="InterPro" id="IPR036695">
    <property type="entry name" value="Arg-tRNA-synth_N_sf"/>
</dbReference>
<dbReference type="InterPro" id="IPR035684">
    <property type="entry name" value="ArgRS_core"/>
</dbReference>
<dbReference type="InterPro" id="IPR008909">
    <property type="entry name" value="DALR_anticod-bd"/>
</dbReference>
<dbReference type="InterPro" id="IPR014729">
    <property type="entry name" value="Rossmann-like_a/b/a_fold"/>
</dbReference>
<dbReference type="InterPro" id="IPR009080">
    <property type="entry name" value="tRNAsynth_Ia_anticodon-bd"/>
</dbReference>
<dbReference type="NCBIfam" id="TIGR00456">
    <property type="entry name" value="argS"/>
    <property type="match status" value="1"/>
</dbReference>
<dbReference type="PANTHER" id="PTHR11956:SF5">
    <property type="entry name" value="ARGININE--TRNA LIGASE, CYTOPLASMIC"/>
    <property type="match status" value="1"/>
</dbReference>
<dbReference type="PANTHER" id="PTHR11956">
    <property type="entry name" value="ARGINYL-TRNA SYNTHETASE"/>
    <property type="match status" value="1"/>
</dbReference>
<dbReference type="Pfam" id="PF03485">
    <property type="entry name" value="Arg_tRNA_synt_N"/>
    <property type="match status" value="1"/>
</dbReference>
<dbReference type="Pfam" id="PF05746">
    <property type="entry name" value="DALR_1"/>
    <property type="match status" value="1"/>
</dbReference>
<dbReference type="Pfam" id="PF00750">
    <property type="entry name" value="tRNA-synt_1d"/>
    <property type="match status" value="1"/>
</dbReference>
<dbReference type="PRINTS" id="PR01038">
    <property type="entry name" value="TRNASYNTHARG"/>
</dbReference>
<dbReference type="SMART" id="SM01016">
    <property type="entry name" value="Arg_tRNA_synt_N"/>
    <property type="match status" value="1"/>
</dbReference>
<dbReference type="SMART" id="SM00836">
    <property type="entry name" value="DALR_1"/>
    <property type="match status" value="1"/>
</dbReference>
<dbReference type="SUPFAM" id="SSF47323">
    <property type="entry name" value="Anticodon-binding domain of a subclass of class I aminoacyl-tRNA synthetases"/>
    <property type="match status" value="1"/>
</dbReference>
<dbReference type="SUPFAM" id="SSF55190">
    <property type="entry name" value="Arginyl-tRNA synthetase (ArgRS), N-terminal 'additional' domain"/>
    <property type="match status" value="1"/>
</dbReference>
<dbReference type="SUPFAM" id="SSF52374">
    <property type="entry name" value="Nucleotidylyl transferase"/>
    <property type="match status" value="1"/>
</dbReference>
<dbReference type="PROSITE" id="PS00178">
    <property type="entry name" value="AA_TRNA_LIGASE_I"/>
    <property type="match status" value="1"/>
</dbReference>
<feature type="chain" id="PRO_0000151573" description="Arginine--tRNA ligase">
    <location>
        <begin position="1"/>
        <end position="556"/>
    </location>
</feature>
<feature type="short sequence motif" description="'HIGH' region">
    <location>
        <begin position="132"/>
        <end position="142"/>
    </location>
</feature>
<gene>
    <name evidence="1" type="primary">argS</name>
    <name type="ordered locus">LMOf2365_2533</name>
</gene>
<keyword id="KW-0030">Aminoacyl-tRNA synthetase</keyword>
<keyword id="KW-0067">ATP-binding</keyword>
<keyword id="KW-0963">Cytoplasm</keyword>
<keyword id="KW-0436">Ligase</keyword>
<keyword id="KW-0547">Nucleotide-binding</keyword>
<keyword id="KW-0648">Protein biosynthesis</keyword>
<protein>
    <recommendedName>
        <fullName evidence="1">Arginine--tRNA ligase</fullName>
        <ecNumber evidence="1">6.1.1.19</ecNumber>
    </recommendedName>
    <alternativeName>
        <fullName evidence="1">Arginyl-tRNA synthetase</fullName>
        <shortName evidence="1">ArgRS</shortName>
    </alternativeName>
</protein>
<reference key="1">
    <citation type="journal article" date="2004" name="Nucleic Acids Res.">
        <title>Whole genome comparisons of serotype 4b and 1/2a strains of the food-borne pathogen Listeria monocytogenes reveal new insights into the core genome components of this species.</title>
        <authorList>
            <person name="Nelson K.E."/>
            <person name="Fouts D.E."/>
            <person name="Mongodin E.F."/>
            <person name="Ravel J."/>
            <person name="DeBoy R.T."/>
            <person name="Kolonay J.F."/>
            <person name="Rasko D.A."/>
            <person name="Angiuoli S.V."/>
            <person name="Gill S.R."/>
            <person name="Paulsen I.T."/>
            <person name="Peterson J.D."/>
            <person name="White O."/>
            <person name="Nelson W.C."/>
            <person name="Nierman W.C."/>
            <person name="Beanan M.J."/>
            <person name="Brinkac L.M."/>
            <person name="Daugherty S.C."/>
            <person name="Dodson R.J."/>
            <person name="Durkin A.S."/>
            <person name="Madupu R."/>
            <person name="Haft D.H."/>
            <person name="Selengut J."/>
            <person name="Van Aken S.E."/>
            <person name="Khouri H.M."/>
            <person name="Fedorova N."/>
            <person name="Forberger H.A."/>
            <person name="Tran B."/>
            <person name="Kathariou S."/>
            <person name="Wonderling L.D."/>
            <person name="Uhlich G.A."/>
            <person name="Bayles D.O."/>
            <person name="Luchansky J.B."/>
            <person name="Fraser C.M."/>
        </authorList>
    </citation>
    <scope>NUCLEOTIDE SEQUENCE [LARGE SCALE GENOMIC DNA]</scope>
    <source>
        <strain>F2365</strain>
    </source>
</reference>
<proteinExistence type="inferred from homology"/>